<feature type="chain" id="PRO_0000252589" description="Gamma-glutamyl phosphate reductase">
    <location>
        <begin position="1"/>
        <end position="430"/>
    </location>
</feature>
<protein>
    <recommendedName>
        <fullName evidence="1">Gamma-glutamyl phosphate reductase</fullName>
        <shortName evidence="1">GPR</shortName>
        <ecNumber evidence="1">1.2.1.41</ecNumber>
    </recommendedName>
    <alternativeName>
        <fullName evidence="1">Glutamate-5-semialdehyde dehydrogenase</fullName>
    </alternativeName>
    <alternativeName>
        <fullName evidence="1">Glutamyl-gamma-semialdehyde dehydrogenase</fullName>
        <shortName evidence="1">GSA dehydrogenase</shortName>
    </alternativeName>
</protein>
<proteinExistence type="inferred from homology"/>
<name>PROA_RHOP2</name>
<comment type="function">
    <text evidence="1">Catalyzes the NADPH-dependent reduction of L-glutamate 5-phosphate into L-glutamate 5-semialdehyde and phosphate. The product spontaneously undergoes cyclization to form 1-pyrroline-5-carboxylate.</text>
</comment>
<comment type="catalytic activity">
    <reaction evidence="1">
        <text>L-glutamate 5-semialdehyde + phosphate + NADP(+) = L-glutamyl 5-phosphate + NADPH + H(+)</text>
        <dbReference type="Rhea" id="RHEA:19541"/>
        <dbReference type="ChEBI" id="CHEBI:15378"/>
        <dbReference type="ChEBI" id="CHEBI:43474"/>
        <dbReference type="ChEBI" id="CHEBI:57783"/>
        <dbReference type="ChEBI" id="CHEBI:58066"/>
        <dbReference type="ChEBI" id="CHEBI:58274"/>
        <dbReference type="ChEBI" id="CHEBI:58349"/>
        <dbReference type="EC" id="1.2.1.41"/>
    </reaction>
</comment>
<comment type="pathway">
    <text evidence="1">Amino-acid biosynthesis; L-proline biosynthesis; L-glutamate 5-semialdehyde from L-glutamate: step 2/2.</text>
</comment>
<comment type="subcellular location">
    <subcellularLocation>
        <location evidence="1">Cytoplasm</location>
    </subcellularLocation>
</comment>
<comment type="similarity">
    <text evidence="1">Belongs to the gamma-glutamyl phosphate reductase family.</text>
</comment>
<evidence type="ECO:0000255" key="1">
    <source>
        <dbReference type="HAMAP-Rule" id="MF_00412"/>
    </source>
</evidence>
<accession>Q2J3J6</accession>
<sequence length="430" mass="45107">MTASLKAIDGSAELATLMHDLGRRARAAARVLALASPEQKNRALEAMERAIRAGADKILAANAEDVADANASGANSAFLDRLTLTPARVEAMAEGIAVVRGIPDPVGAVTESWQRPNGMTIERVRVPLGVVAVIYESRPNVTADAGVLCLKSGNAVILRGGSESFRSGRAIHDCLVQGLREAGLPEAAITLVPTRDRAAVGLLLGGLNGSVDVIVPRGGKSLVARVESEARVPVFAHLEGVNHVYIDRSADLDMAKSIVLNAKMRRTGVCGAAETLLIDRAAADTHLAPLVAMLIDAGCEVRGDAIVQHADARVKPATDQDWDTEYLDAVIAAKVVDDVDDAIVHIHDHGSHHTDAIVAEDAQTAAKFLGEVDSAIVLHNASTQFADGGEFGFGAEIGIATGKFHARGPVGAEQLTTFKYRIHGTGQTRP</sequence>
<organism>
    <name type="scientific">Rhodopseudomonas palustris (strain HaA2)</name>
    <dbReference type="NCBI Taxonomy" id="316058"/>
    <lineage>
        <taxon>Bacteria</taxon>
        <taxon>Pseudomonadati</taxon>
        <taxon>Pseudomonadota</taxon>
        <taxon>Alphaproteobacteria</taxon>
        <taxon>Hyphomicrobiales</taxon>
        <taxon>Nitrobacteraceae</taxon>
        <taxon>Rhodopseudomonas</taxon>
    </lineage>
</organism>
<reference key="1">
    <citation type="submission" date="2006-01" db="EMBL/GenBank/DDBJ databases">
        <title>Complete sequence of Rhodopseudomonas palustris HaA2.</title>
        <authorList>
            <consortium name="US DOE Joint Genome Institute"/>
            <person name="Copeland A."/>
            <person name="Lucas S."/>
            <person name="Lapidus A."/>
            <person name="Barry K."/>
            <person name="Detter J.C."/>
            <person name="Glavina T."/>
            <person name="Hammon N."/>
            <person name="Israni S."/>
            <person name="Pitluck S."/>
            <person name="Chain P."/>
            <person name="Malfatti S."/>
            <person name="Shin M."/>
            <person name="Vergez L."/>
            <person name="Schmutz J."/>
            <person name="Larimer F."/>
            <person name="Land M."/>
            <person name="Hauser L."/>
            <person name="Pelletier D.A."/>
            <person name="Kyrpides N."/>
            <person name="Anderson I."/>
            <person name="Oda Y."/>
            <person name="Harwood C.S."/>
            <person name="Richardson P."/>
        </authorList>
    </citation>
    <scope>NUCLEOTIDE SEQUENCE [LARGE SCALE GENOMIC DNA]</scope>
    <source>
        <strain>HaA2</strain>
    </source>
</reference>
<gene>
    <name evidence="1" type="primary">proA</name>
    <name type="ordered locus">RPB_0253</name>
</gene>
<dbReference type="EC" id="1.2.1.41" evidence="1"/>
<dbReference type="EMBL" id="CP000250">
    <property type="protein sequence ID" value="ABD04964.1"/>
    <property type="molecule type" value="Genomic_DNA"/>
</dbReference>
<dbReference type="RefSeq" id="WP_011439154.1">
    <property type="nucleotide sequence ID" value="NC_007778.1"/>
</dbReference>
<dbReference type="SMR" id="Q2J3J6"/>
<dbReference type="STRING" id="316058.RPB_0253"/>
<dbReference type="KEGG" id="rpb:RPB_0253"/>
<dbReference type="eggNOG" id="COG0014">
    <property type="taxonomic scope" value="Bacteria"/>
</dbReference>
<dbReference type="HOGENOM" id="CLU_030231_0_0_5"/>
<dbReference type="OrthoDB" id="9809970at2"/>
<dbReference type="UniPathway" id="UPA00098">
    <property type="reaction ID" value="UER00360"/>
</dbReference>
<dbReference type="Proteomes" id="UP000008809">
    <property type="component" value="Chromosome"/>
</dbReference>
<dbReference type="GO" id="GO:0005737">
    <property type="term" value="C:cytoplasm"/>
    <property type="evidence" value="ECO:0007669"/>
    <property type="project" value="UniProtKB-SubCell"/>
</dbReference>
<dbReference type="GO" id="GO:0004350">
    <property type="term" value="F:glutamate-5-semialdehyde dehydrogenase activity"/>
    <property type="evidence" value="ECO:0007669"/>
    <property type="project" value="UniProtKB-UniRule"/>
</dbReference>
<dbReference type="GO" id="GO:0050661">
    <property type="term" value="F:NADP binding"/>
    <property type="evidence" value="ECO:0007669"/>
    <property type="project" value="InterPro"/>
</dbReference>
<dbReference type="GO" id="GO:0055129">
    <property type="term" value="P:L-proline biosynthetic process"/>
    <property type="evidence" value="ECO:0007669"/>
    <property type="project" value="UniProtKB-UniRule"/>
</dbReference>
<dbReference type="CDD" id="cd07079">
    <property type="entry name" value="ALDH_F18-19_ProA-GPR"/>
    <property type="match status" value="1"/>
</dbReference>
<dbReference type="FunFam" id="3.40.309.10:FF:000006">
    <property type="entry name" value="Gamma-glutamyl phosphate reductase"/>
    <property type="match status" value="1"/>
</dbReference>
<dbReference type="Gene3D" id="3.40.605.10">
    <property type="entry name" value="Aldehyde Dehydrogenase, Chain A, domain 1"/>
    <property type="match status" value="1"/>
</dbReference>
<dbReference type="Gene3D" id="3.40.309.10">
    <property type="entry name" value="Aldehyde Dehydrogenase, Chain A, domain 2"/>
    <property type="match status" value="1"/>
</dbReference>
<dbReference type="HAMAP" id="MF_00412">
    <property type="entry name" value="ProA"/>
    <property type="match status" value="1"/>
</dbReference>
<dbReference type="InterPro" id="IPR016161">
    <property type="entry name" value="Ald_DH/histidinol_DH"/>
</dbReference>
<dbReference type="InterPro" id="IPR016163">
    <property type="entry name" value="Ald_DH_C"/>
</dbReference>
<dbReference type="InterPro" id="IPR016162">
    <property type="entry name" value="Ald_DH_N"/>
</dbReference>
<dbReference type="InterPro" id="IPR015590">
    <property type="entry name" value="Aldehyde_DH_dom"/>
</dbReference>
<dbReference type="InterPro" id="IPR020593">
    <property type="entry name" value="G-glutamylP_reductase_CS"/>
</dbReference>
<dbReference type="InterPro" id="IPR012134">
    <property type="entry name" value="Glu-5-SA_DH"/>
</dbReference>
<dbReference type="InterPro" id="IPR000965">
    <property type="entry name" value="GPR_dom"/>
</dbReference>
<dbReference type="NCBIfam" id="NF001221">
    <property type="entry name" value="PRK00197.1"/>
    <property type="match status" value="1"/>
</dbReference>
<dbReference type="NCBIfam" id="TIGR00407">
    <property type="entry name" value="proA"/>
    <property type="match status" value="1"/>
</dbReference>
<dbReference type="PANTHER" id="PTHR11063:SF8">
    <property type="entry name" value="DELTA-1-PYRROLINE-5-CARBOXYLATE SYNTHASE"/>
    <property type="match status" value="1"/>
</dbReference>
<dbReference type="PANTHER" id="PTHR11063">
    <property type="entry name" value="GLUTAMATE SEMIALDEHYDE DEHYDROGENASE"/>
    <property type="match status" value="1"/>
</dbReference>
<dbReference type="Pfam" id="PF00171">
    <property type="entry name" value="Aldedh"/>
    <property type="match status" value="1"/>
</dbReference>
<dbReference type="PIRSF" id="PIRSF000151">
    <property type="entry name" value="GPR"/>
    <property type="match status" value="1"/>
</dbReference>
<dbReference type="SUPFAM" id="SSF53720">
    <property type="entry name" value="ALDH-like"/>
    <property type="match status" value="1"/>
</dbReference>
<dbReference type="PROSITE" id="PS01223">
    <property type="entry name" value="PROA"/>
    <property type="match status" value="1"/>
</dbReference>
<keyword id="KW-0028">Amino-acid biosynthesis</keyword>
<keyword id="KW-0963">Cytoplasm</keyword>
<keyword id="KW-0521">NADP</keyword>
<keyword id="KW-0560">Oxidoreductase</keyword>
<keyword id="KW-0641">Proline biosynthesis</keyword>
<keyword id="KW-1185">Reference proteome</keyword>